<proteinExistence type="evidence at protein level"/>
<protein>
    <recommendedName>
        <fullName>Glycinol 4-dimethylallyltransferase</fullName>
        <ecNumber>2.5.1.36</ecNumber>
    </recommendedName>
    <alternativeName>
        <fullName>Dimethylallyl diphosphate:(6aS,11aS)-(-)-3,9,6a-trihydroxypterocarpan ((-)-glycinol) 4-dimethylallyltransferase</fullName>
    </alternativeName>
    <alternativeName>
        <fullName>Glyceollin synthase</fullName>
    </alternativeName>
    <alternativeName>
        <fullName>Pterocarpan 4-dimethylallyltransferase</fullName>
    </alternativeName>
</protein>
<evidence type="ECO:0000255" key="1"/>
<evidence type="ECO:0000269" key="2">
    <source>
    </source>
</evidence>
<evidence type="ECO:0000305" key="3"/>
<evidence type="ECO:0000305" key="4">
    <source>
    </source>
</evidence>
<gene>
    <name type="primary">G4DT</name>
    <name type="ordered locus">Glyma10g44170</name>
    <name type="ORF">Gma.5621</name>
</gene>
<keyword id="KW-0150">Chloroplast</keyword>
<keyword id="KW-0460">Magnesium</keyword>
<keyword id="KW-0472">Membrane</keyword>
<keyword id="KW-0934">Plastid</keyword>
<keyword id="KW-1185">Reference proteome</keyword>
<keyword id="KW-0808">Transferase</keyword>
<keyword id="KW-0809">Transit peptide</keyword>
<keyword id="KW-0812">Transmembrane</keyword>
<keyword id="KW-1133">Transmembrane helix</keyword>
<sequence length="409" mass="46012">MDWGLAISSHPKPYSVTTGGNLWRSKHTTKNIYFASSWISKASRHKRETQIEHNVLRFQQPSLDHHYKCIRGGSTYQECNRKFVVKAISKQPLGFEAHASNPKNILDSVKNVLSAFYWFSYPYTMIGITLCAFSSSLLAVEKLSDISLSFLIGVLQGVLPQLFIEIYLCGVNQLYDLEIDKINKPHLPMASGQFSFKTGVIISAAFLALSFGFTWITGSWPLICNLVVIASSWTAYSIDVPLLRWKRYPFVAAMCMISTWALALPISYFHHMQTVVLKRPIGFPRSLGFLVAFMTFYSLGLALSKDIPDVEGDKEHGIDSFAVRLGQKRAFWICVSFFEMAFGVGILAGASCSHFWTKIFTGMGNAVLASILWYQAKSVDLSDKASTGSFYMFIWKLLYAGFFLMALIR</sequence>
<comment type="function">
    <text evidence="2">Proposed to be involved in the biosynthesis of pterocarpan phytoalexins, specifically glyceollins. Can act as a prenyltransferase towards glycinol which is the direct precursor of glyceollins. Seems to be specific for prenylation at C-4 thus producing glyceollin I.</text>
</comment>
<comment type="catalytic activity">
    <reaction evidence="2">
        <text>(6aS,11aS)-3,6a,9-trihydroxypterocarpan + dimethylallyl diphosphate = (6aS,11aS)-2-dimethylallyl-3,6a,9-trihydroxypterocarpan + diphosphate</text>
        <dbReference type="Rhea" id="RHEA:19345"/>
        <dbReference type="ChEBI" id="CHEBI:15649"/>
        <dbReference type="ChEBI" id="CHEBI:33019"/>
        <dbReference type="ChEBI" id="CHEBI:50118"/>
        <dbReference type="ChEBI" id="CHEBI:57623"/>
        <dbReference type="EC" id="2.5.1.36"/>
    </reaction>
</comment>
<comment type="catalytic activity">
    <reaction evidence="2">
        <text>(6aS,11aS)-3,6a,9-trihydroxypterocarpan + dimethylallyl diphosphate = (6aS,11aS)-4-dimethylallyl-3,6a,9-trihydroxypterocarpan + diphosphate</text>
        <dbReference type="Rhea" id="RHEA:23184"/>
        <dbReference type="ChEBI" id="CHEBI:15649"/>
        <dbReference type="ChEBI" id="CHEBI:33019"/>
        <dbReference type="ChEBI" id="CHEBI:50036"/>
        <dbReference type="ChEBI" id="CHEBI:57623"/>
        <dbReference type="EC" id="2.5.1.36"/>
    </reaction>
</comment>
<comment type="cofactor">
    <cofactor evidence="2">
        <name>Mg(2+)</name>
        <dbReference type="ChEBI" id="CHEBI:18420"/>
    </cofactor>
    <cofactor evidence="2">
        <name>Mn(2+)</name>
        <dbReference type="ChEBI" id="CHEBI:29035"/>
    </cofactor>
    <cofactor evidence="2">
        <name>Co(2+)</name>
        <dbReference type="ChEBI" id="CHEBI:48828"/>
    </cofactor>
    <text evidence="2">Magnesium or manganese or cobalt at a lesser extent.</text>
</comment>
<comment type="biophysicochemical properties">
    <kinetics>
        <KM evidence="2">45 uM for (-)-glycinol</KM>
        <KM evidence="2">180 uM for dimethylallyl diphosphate</KM>
    </kinetics>
</comment>
<comment type="pathway">
    <text>Phytoalexin biosynthesis; pterocarpan phytoalexin biosynthesis.</text>
</comment>
<comment type="subcellular location">
    <subcellularLocation>
        <location evidence="4">Plastid</location>
        <location evidence="4">Chloroplast membrane</location>
        <topology evidence="4">Multi-pass membrane protein</topology>
    </subcellularLocation>
</comment>
<comment type="induction">
    <text evidence="2">Upon treatment with yeast extract.</text>
</comment>
<comment type="similarity">
    <text evidence="3">Belongs to the UbiA prenyltransferase family.</text>
</comment>
<reference key="1">
    <citation type="journal article" date="2009" name="Plant Physiol.">
        <title>Molecular cloning and characterization of a cDNA for pterocarpan 4-dimethylallyltransferase catalyzing the key prenylation step in the biosynthesis of glyceollin, a soybean phytoalexin.</title>
        <authorList>
            <person name="Akashi T."/>
            <person name="Sasaki K."/>
            <person name="Aoki T."/>
            <person name="Ayabe S."/>
            <person name="Yazaki K."/>
        </authorList>
    </citation>
    <scope>NUCLEOTIDE SEQUENCE [MRNA]</scope>
    <scope>FUNCTION</scope>
    <scope>CATALYTIC ACTIVITY</scope>
    <scope>COFACTOR</scope>
    <scope>BIOPHYSICOCHEMICAL PROPERTIES</scope>
    <scope>SUBCELLULAR LOCATION</scope>
    <scope>INDUCTION</scope>
    <source>
        <tissue>Protoplast</tissue>
    </source>
</reference>
<reference key="2">
    <citation type="journal article" date="2010" name="Nature">
        <title>Genome sequence of the palaeopolyploid soybean.</title>
        <authorList>
            <person name="Schmutz J."/>
            <person name="Cannon S.B."/>
            <person name="Schlueter J."/>
            <person name="Ma J."/>
            <person name="Mitros T."/>
            <person name="Nelson W."/>
            <person name="Hyten D.L."/>
            <person name="Song Q."/>
            <person name="Thelen J.J."/>
            <person name="Cheng J."/>
            <person name="Xu D."/>
            <person name="Hellsten U."/>
            <person name="May G.D."/>
            <person name="Yu Y."/>
            <person name="Sakurai T."/>
            <person name="Umezawa T."/>
            <person name="Bhattacharyya M.K."/>
            <person name="Sandhu D."/>
            <person name="Valliyodan B."/>
            <person name="Lindquist E."/>
            <person name="Peto M."/>
            <person name="Grant D."/>
            <person name="Shu S."/>
            <person name="Goodstein D."/>
            <person name="Barry K."/>
            <person name="Futrell-Griggs M."/>
            <person name="Abernathy B."/>
            <person name="Du J."/>
            <person name="Tian Z."/>
            <person name="Zhu L."/>
            <person name="Gill N."/>
            <person name="Joshi T."/>
            <person name="Libault M."/>
            <person name="Sethuraman A."/>
            <person name="Zhang X.-C."/>
            <person name="Shinozaki K."/>
            <person name="Nguyen H.T."/>
            <person name="Wing R.A."/>
            <person name="Cregan P."/>
            <person name="Specht J."/>
            <person name="Grimwood J."/>
            <person name="Rokhsar D."/>
            <person name="Stacey G."/>
            <person name="Shoemaker R.C."/>
            <person name="Jackson S.A."/>
        </authorList>
    </citation>
    <scope>NUCLEOTIDE SEQUENCE [LARGE SCALE GENOMIC DNA]</scope>
    <source>
        <strain>cv. Williams 82</strain>
    </source>
</reference>
<name>G4DT_SOYBN</name>
<feature type="transit peptide" description="Chloroplast" evidence="3">
    <location>
        <begin position="1"/>
        <end position="44"/>
    </location>
</feature>
<feature type="chain" id="PRO_0000418898" description="Glycinol 4-dimethylallyltransferase">
    <location>
        <begin position="45"/>
        <end position="409"/>
    </location>
</feature>
<feature type="transmembrane region" description="Helical" evidence="1">
    <location>
        <begin position="113"/>
        <end position="133"/>
    </location>
</feature>
<feature type="transmembrane region" description="Helical" evidence="1">
    <location>
        <begin position="148"/>
        <end position="168"/>
    </location>
</feature>
<feature type="transmembrane region" description="Helical" evidence="1">
    <location>
        <begin position="200"/>
        <end position="220"/>
    </location>
</feature>
<feature type="transmembrane region" description="Helical" evidence="1">
    <location>
        <begin position="222"/>
        <end position="242"/>
    </location>
</feature>
<feature type="transmembrane region" description="Helical" evidence="1">
    <location>
        <begin position="249"/>
        <end position="269"/>
    </location>
</feature>
<feature type="transmembrane region" description="Helical" evidence="1">
    <location>
        <begin position="287"/>
        <end position="307"/>
    </location>
</feature>
<feature type="transmembrane region" description="Helical" evidence="1">
    <location>
        <begin position="330"/>
        <end position="350"/>
    </location>
</feature>
<feature type="transmembrane region" description="Helical" evidence="1">
    <location>
        <begin position="354"/>
        <end position="374"/>
    </location>
</feature>
<feature type="transmembrane region" description="Helical" evidence="1">
    <location>
        <begin position="388"/>
        <end position="408"/>
    </location>
</feature>
<organism>
    <name type="scientific">Glycine max</name>
    <name type="common">Soybean</name>
    <name type="synonym">Glycine hispida</name>
    <dbReference type="NCBI Taxonomy" id="3847"/>
    <lineage>
        <taxon>Eukaryota</taxon>
        <taxon>Viridiplantae</taxon>
        <taxon>Streptophyta</taxon>
        <taxon>Embryophyta</taxon>
        <taxon>Tracheophyta</taxon>
        <taxon>Spermatophyta</taxon>
        <taxon>Magnoliopsida</taxon>
        <taxon>eudicotyledons</taxon>
        <taxon>Gunneridae</taxon>
        <taxon>Pentapetalae</taxon>
        <taxon>rosids</taxon>
        <taxon>fabids</taxon>
        <taxon>Fabales</taxon>
        <taxon>Fabaceae</taxon>
        <taxon>Papilionoideae</taxon>
        <taxon>50 kb inversion clade</taxon>
        <taxon>NPAAA clade</taxon>
        <taxon>indigoferoid/millettioid clade</taxon>
        <taxon>Phaseoleae</taxon>
        <taxon>Glycine</taxon>
        <taxon>Glycine subgen. Soja</taxon>
    </lineage>
</organism>
<dbReference type="EC" id="2.5.1.36"/>
<dbReference type="EMBL" id="AB434690">
    <property type="protein sequence ID" value="BAH22520.1"/>
    <property type="molecule type" value="mRNA"/>
</dbReference>
<dbReference type="EMBL" id="CM000843">
    <property type="status" value="NOT_ANNOTATED_CDS"/>
    <property type="molecule type" value="Genomic_DNA"/>
</dbReference>
<dbReference type="RefSeq" id="NP_001235990.1">
    <property type="nucleotide sequence ID" value="NM_001249061.2"/>
</dbReference>
<dbReference type="SMR" id="B9A1Q4"/>
<dbReference type="STRING" id="3847.B9A1Q4"/>
<dbReference type="PaxDb" id="3847-GLYMA10G44170.1"/>
<dbReference type="EnsemblPlants" id="KRH36303">
    <property type="protein sequence ID" value="KRH36303"/>
    <property type="gene ID" value="GLYMA_10G295300"/>
</dbReference>
<dbReference type="GeneID" id="100301896"/>
<dbReference type="Gramene" id="KRH36303">
    <property type="protein sequence ID" value="KRH36303"/>
    <property type="gene ID" value="GLYMA_10G295300"/>
</dbReference>
<dbReference type="KEGG" id="gmx:100301896"/>
<dbReference type="eggNOG" id="ENOG502R0I3">
    <property type="taxonomic scope" value="Eukaryota"/>
</dbReference>
<dbReference type="HOGENOM" id="CLU_048963_0_1_1"/>
<dbReference type="InParanoid" id="B9A1Q4"/>
<dbReference type="OMA" id="HAIMAGI"/>
<dbReference type="OrthoDB" id="1502398at2759"/>
<dbReference type="BRENDA" id="2.5.1.36">
    <property type="organism ID" value="2483"/>
</dbReference>
<dbReference type="UniPathway" id="UPA00901"/>
<dbReference type="Proteomes" id="UP000008827">
    <property type="component" value="Chromosome 10"/>
</dbReference>
<dbReference type="GO" id="GO:0031969">
    <property type="term" value="C:chloroplast membrane"/>
    <property type="evidence" value="ECO:0007669"/>
    <property type="project" value="UniProtKB-SubCell"/>
</dbReference>
<dbReference type="GO" id="GO:0004659">
    <property type="term" value="F:prenyltransferase activity"/>
    <property type="evidence" value="ECO:0007669"/>
    <property type="project" value="InterPro"/>
</dbReference>
<dbReference type="GO" id="GO:0047292">
    <property type="term" value="F:trihydroxypterocarpan dimethylallyltransferase activity"/>
    <property type="evidence" value="ECO:0007669"/>
    <property type="project" value="UniProtKB-EC"/>
</dbReference>
<dbReference type="CDD" id="cd13960">
    <property type="entry name" value="PT_UbiA_HPT1"/>
    <property type="match status" value="1"/>
</dbReference>
<dbReference type="Gene3D" id="1.10.357.140">
    <property type="entry name" value="UbiA prenyltransferase"/>
    <property type="match status" value="1"/>
</dbReference>
<dbReference type="Gene3D" id="1.20.120.1780">
    <property type="entry name" value="UbiA prenyltransferase"/>
    <property type="match status" value="1"/>
</dbReference>
<dbReference type="InterPro" id="IPR044502">
    <property type="entry name" value="AtHST-like"/>
</dbReference>
<dbReference type="InterPro" id="IPR000537">
    <property type="entry name" value="UbiA_prenyltransferase"/>
</dbReference>
<dbReference type="InterPro" id="IPR044878">
    <property type="entry name" value="UbiA_sf"/>
</dbReference>
<dbReference type="PANTHER" id="PTHR43009:SF6">
    <property type="entry name" value="HOMOGENTISATE PHYTYLTRANSFERASE 1, CHLOROPLASTIC"/>
    <property type="match status" value="1"/>
</dbReference>
<dbReference type="PANTHER" id="PTHR43009">
    <property type="entry name" value="HOMOGENTISATE SOLANESYLTRANSFERASE, CHLOROPLASTIC"/>
    <property type="match status" value="1"/>
</dbReference>
<dbReference type="Pfam" id="PF01040">
    <property type="entry name" value="UbiA"/>
    <property type="match status" value="1"/>
</dbReference>
<accession>B9A1Q4</accession>